<reference key="1">
    <citation type="journal article" date="2008" name="J. Bacteriol.">
        <title>Genome sequence of Lactobacillus helveticus: an organism distinguished by selective gene loss and IS element expansion.</title>
        <authorList>
            <person name="Callanan M."/>
            <person name="Kaleta P."/>
            <person name="O'Callaghan J."/>
            <person name="O'Sullivan O."/>
            <person name="Jordan K."/>
            <person name="McAuliffe O."/>
            <person name="Sangrador-Vegas A."/>
            <person name="Slattery L."/>
            <person name="Fitzgerald G.F."/>
            <person name="Beresford T."/>
            <person name="Ross R.P."/>
        </authorList>
    </citation>
    <scope>NUCLEOTIDE SEQUENCE [LARGE SCALE GENOMIC DNA]</scope>
    <source>
        <strain>DPC 4571</strain>
    </source>
</reference>
<name>RL7_LACH4</name>
<gene>
    <name evidence="1" type="primary">rplL</name>
    <name type="ordered locus">lhv_0396</name>
</gene>
<proteinExistence type="inferred from homology"/>
<comment type="function">
    <text evidence="1">Forms part of the ribosomal stalk which helps the ribosome interact with GTP-bound translation factors. Is thus essential for accurate translation.</text>
</comment>
<comment type="subunit">
    <text evidence="1">Homodimer. Part of the ribosomal stalk of the 50S ribosomal subunit. Forms a multimeric L10(L12)X complex, where L10 forms an elongated spine to which 2 to 4 L12 dimers bind in a sequential fashion. Binds GTP-bound translation factors.</text>
</comment>
<comment type="similarity">
    <text evidence="1">Belongs to the bacterial ribosomal protein bL12 family.</text>
</comment>
<evidence type="ECO:0000255" key="1">
    <source>
        <dbReference type="HAMAP-Rule" id="MF_00368"/>
    </source>
</evidence>
<evidence type="ECO:0000305" key="2"/>
<keyword id="KW-0687">Ribonucleoprotein</keyword>
<keyword id="KW-0689">Ribosomal protein</keyword>
<feature type="chain" id="PRO_1000072115" description="Large ribosomal subunit protein bL12">
    <location>
        <begin position="1"/>
        <end position="120"/>
    </location>
</feature>
<sequence length="120" mass="12479">MALDTDKIIEELKGASILELNDLVKAIEDEFDVTAAAPVAAAGAADAGAAKSEFDVELTEAGQEKVKVIKAVRDITGLGLKDSKDLVDGAPKNVKEGVSEDEANDIKAKLEEVGATVTLK</sequence>
<accession>A8YTF2</accession>
<dbReference type="EMBL" id="CP000517">
    <property type="protein sequence ID" value="ABX26608.1"/>
    <property type="molecule type" value="Genomic_DNA"/>
</dbReference>
<dbReference type="RefSeq" id="WP_003625909.1">
    <property type="nucleotide sequence ID" value="NC_010080.1"/>
</dbReference>
<dbReference type="SMR" id="A8YTF2"/>
<dbReference type="GeneID" id="78202541"/>
<dbReference type="KEGG" id="lhe:lhv_0396"/>
<dbReference type="eggNOG" id="COG0222">
    <property type="taxonomic scope" value="Bacteria"/>
</dbReference>
<dbReference type="HOGENOM" id="CLU_086499_3_2_9"/>
<dbReference type="Proteomes" id="UP000000790">
    <property type="component" value="Chromosome"/>
</dbReference>
<dbReference type="GO" id="GO:0022625">
    <property type="term" value="C:cytosolic large ribosomal subunit"/>
    <property type="evidence" value="ECO:0007669"/>
    <property type="project" value="TreeGrafter"/>
</dbReference>
<dbReference type="GO" id="GO:0003729">
    <property type="term" value="F:mRNA binding"/>
    <property type="evidence" value="ECO:0007669"/>
    <property type="project" value="TreeGrafter"/>
</dbReference>
<dbReference type="GO" id="GO:0003735">
    <property type="term" value="F:structural constituent of ribosome"/>
    <property type="evidence" value="ECO:0007669"/>
    <property type="project" value="InterPro"/>
</dbReference>
<dbReference type="GO" id="GO:0006412">
    <property type="term" value="P:translation"/>
    <property type="evidence" value="ECO:0007669"/>
    <property type="project" value="UniProtKB-UniRule"/>
</dbReference>
<dbReference type="CDD" id="cd00387">
    <property type="entry name" value="Ribosomal_L7_L12"/>
    <property type="match status" value="1"/>
</dbReference>
<dbReference type="FunFam" id="3.30.1390.10:FF:000001">
    <property type="entry name" value="50S ribosomal protein L7/L12"/>
    <property type="match status" value="1"/>
</dbReference>
<dbReference type="Gene3D" id="3.30.1390.10">
    <property type="match status" value="1"/>
</dbReference>
<dbReference type="Gene3D" id="1.20.5.710">
    <property type="entry name" value="Single helix bin"/>
    <property type="match status" value="1"/>
</dbReference>
<dbReference type="HAMAP" id="MF_00368">
    <property type="entry name" value="Ribosomal_bL12"/>
    <property type="match status" value="1"/>
</dbReference>
<dbReference type="InterPro" id="IPR000206">
    <property type="entry name" value="Ribosomal_bL12"/>
</dbReference>
<dbReference type="InterPro" id="IPR013823">
    <property type="entry name" value="Ribosomal_bL12_C"/>
</dbReference>
<dbReference type="InterPro" id="IPR014719">
    <property type="entry name" value="Ribosomal_bL12_C/ClpS-like"/>
</dbReference>
<dbReference type="InterPro" id="IPR008932">
    <property type="entry name" value="Ribosomal_bL12_oligo"/>
</dbReference>
<dbReference type="InterPro" id="IPR036235">
    <property type="entry name" value="Ribosomal_bL12_oligo_N_sf"/>
</dbReference>
<dbReference type="NCBIfam" id="TIGR00855">
    <property type="entry name" value="L12"/>
    <property type="match status" value="1"/>
</dbReference>
<dbReference type="PANTHER" id="PTHR45987">
    <property type="entry name" value="39S RIBOSOMAL PROTEIN L12"/>
    <property type="match status" value="1"/>
</dbReference>
<dbReference type="PANTHER" id="PTHR45987:SF4">
    <property type="entry name" value="LARGE RIBOSOMAL SUBUNIT PROTEIN BL12M"/>
    <property type="match status" value="1"/>
</dbReference>
<dbReference type="Pfam" id="PF00542">
    <property type="entry name" value="Ribosomal_L12"/>
    <property type="match status" value="1"/>
</dbReference>
<dbReference type="Pfam" id="PF16320">
    <property type="entry name" value="Ribosomal_L12_N"/>
    <property type="match status" value="1"/>
</dbReference>
<dbReference type="SUPFAM" id="SSF54736">
    <property type="entry name" value="ClpS-like"/>
    <property type="match status" value="1"/>
</dbReference>
<dbReference type="SUPFAM" id="SSF48300">
    <property type="entry name" value="Ribosomal protein L7/12, oligomerisation (N-terminal) domain"/>
    <property type="match status" value="1"/>
</dbReference>
<organism>
    <name type="scientific">Lactobacillus helveticus (strain DPC 4571)</name>
    <dbReference type="NCBI Taxonomy" id="405566"/>
    <lineage>
        <taxon>Bacteria</taxon>
        <taxon>Bacillati</taxon>
        <taxon>Bacillota</taxon>
        <taxon>Bacilli</taxon>
        <taxon>Lactobacillales</taxon>
        <taxon>Lactobacillaceae</taxon>
        <taxon>Lactobacillus</taxon>
    </lineage>
</organism>
<protein>
    <recommendedName>
        <fullName evidence="1">Large ribosomal subunit protein bL12</fullName>
    </recommendedName>
    <alternativeName>
        <fullName evidence="2">50S ribosomal protein L7/L12</fullName>
    </alternativeName>
</protein>